<proteinExistence type="predicted"/>
<sequence length="213" mass="23655">MNISLRPAIAAPSPLDSFLTRHRIGIWRVVVSVVLIALITGHSQWDDTWISAALLTVGMLGVTMATVGRLWCALYISGRKSTELVTTGPYSMCRHPLYVCNFVGIVGLGAMTESITLAAILALAFALMYPAVIRSEDHLLSRNFPEFDDYARRTPAFFPRLSLFRSESTYLVHVGSFQRNLADSVWFLGMTIVVNAVELARHAKWLPTFVLLP</sequence>
<keyword id="KW-0104">Cadmium</keyword>
<keyword id="KW-0105">Cadmium resistance</keyword>
<keyword id="KW-0997">Cell inner membrane</keyword>
<keyword id="KW-1003">Cell membrane</keyword>
<keyword id="KW-0170">Cobalt</keyword>
<keyword id="KW-0472">Membrane</keyword>
<keyword id="KW-0533">Nickel</keyword>
<keyword id="KW-0614">Plasmid</keyword>
<keyword id="KW-0812">Transmembrane</keyword>
<keyword id="KW-1133">Transmembrane helix</keyword>
<keyword id="KW-0813">Transport</keyword>
<geneLocation type="plasmid">
    <name>pTOM9</name>
</geneLocation>
<organism>
    <name type="scientific">Alcaligenes xylosoxydans xylosoxydans</name>
    <name type="common">Achromobacter xylosoxidans</name>
    <dbReference type="NCBI Taxonomy" id="85698"/>
    <lineage>
        <taxon>Bacteria</taxon>
        <taxon>Pseudomonadati</taxon>
        <taxon>Pseudomonadota</taxon>
        <taxon>Betaproteobacteria</taxon>
        <taxon>Burkholderiales</taxon>
        <taxon>Alcaligenaceae</taxon>
        <taxon>Achromobacter</taxon>
    </lineage>
</organism>
<protein>
    <recommendedName>
        <fullName>Nickel-cobalt-cadmium resistance protein NccN</fullName>
    </recommendedName>
</protein>
<name>NCCN_ALCXX</name>
<accession>Q44587</accession>
<dbReference type="EMBL" id="L31363">
    <property type="protein sequence ID" value="AAA65107.1"/>
    <property type="molecule type" value="Genomic_DNA"/>
</dbReference>
<dbReference type="PIR" id="I39581">
    <property type="entry name" value="I39581"/>
</dbReference>
<dbReference type="SMR" id="Q44587"/>
<dbReference type="GO" id="GO:0005886">
    <property type="term" value="C:plasma membrane"/>
    <property type="evidence" value="ECO:0007669"/>
    <property type="project" value="UniProtKB-SubCell"/>
</dbReference>
<dbReference type="GO" id="GO:0004671">
    <property type="term" value="F:protein C-terminal S-isoprenylcysteine carboxyl O-methyltransferase activity"/>
    <property type="evidence" value="ECO:0007669"/>
    <property type="project" value="InterPro"/>
</dbReference>
<dbReference type="GO" id="GO:0046686">
    <property type="term" value="P:response to cadmium ion"/>
    <property type="evidence" value="ECO:0007669"/>
    <property type="project" value="UniProtKB-KW"/>
</dbReference>
<dbReference type="Gene3D" id="1.20.120.1630">
    <property type="match status" value="1"/>
</dbReference>
<dbReference type="InterPro" id="IPR007269">
    <property type="entry name" value="ICMT_MeTrfase"/>
</dbReference>
<dbReference type="PANTHER" id="PTHR12714">
    <property type="entry name" value="PROTEIN-S ISOPRENYLCYSTEINE O-METHYLTRANSFERASE"/>
    <property type="match status" value="1"/>
</dbReference>
<dbReference type="PANTHER" id="PTHR12714:SF9">
    <property type="entry name" value="PROTEIN-S-ISOPRENYLCYSTEINE O-METHYLTRANSFERASE"/>
    <property type="match status" value="1"/>
</dbReference>
<dbReference type="Pfam" id="PF04140">
    <property type="entry name" value="ICMT"/>
    <property type="match status" value="1"/>
</dbReference>
<feature type="chain" id="PRO_0000096756" description="Nickel-cobalt-cadmium resistance protein NccN">
    <location>
        <begin position="1"/>
        <end position="213"/>
    </location>
</feature>
<feature type="transmembrane region" description="Helical" evidence="1">
    <location>
        <begin position="24"/>
        <end position="44"/>
    </location>
</feature>
<feature type="transmembrane region" description="Helical" evidence="1">
    <location>
        <begin position="48"/>
        <end position="68"/>
    </location>
</feature>
<feature type="transmembrane region" description="Helical" evidence="1">
    <location>
        <begin position="113"/>
        <end position="133"/>
    </location>
</feature>
<feature type="transmembrane region" description="Helical" evidence="1">
    <location>
        <begin position="180"/>
        <end position="200"/>
    </location>
</feature>
<comment type="function">
    <text>Component of the NCC cation-efflux system that confers resistance to nickel, cobalt and cadmium. Appears to be involved in metal specificity but affects only nickel resistance. May be involved in nickel transport.</text>
</comment>
<comment type="subcellular location">
    <subcellularLocation>
        <location evidence="2">Cell inner membrane</location>
        <topology evidence="2">Multi-pass membrane protein</topology>
    </subcellularLocation>
</comment>
<comment type="similarity">
    <text evidence="2">To A.eutrophus CzcN.</text>
</comment>
<gene>
    <name type="primary">nccN</name>
</gene>
<evidence type="ECO:0000255" key="1"/>
<evidence type="ECO:0000305" key="2"/>
<reference key="1">
    <citation type="journal article" date="1994" name="J. Bacteriol.">
        <title>Combined nickel-cobalt-cadmium resistance encoded by the ncc locus of Alcaligenes xylosoxidans 31A.</title>
        <authorList>
            <person name="Schmidt T."/>
            <person name="Schlegel H.G."/>
        </authorList>
    </citation>
    <scope>NUCLEOTIDE SEQUENCE [GENOMIC DNA]</scope>
    <source>
        <strain>31A</strain>
    </source>
</reference>